<gene>
    <name type="primary">ACPEPP</name>
</gene>
<keyword id="KW-0325">Glycoprotein</keyword>
<keyword id="KW-0378">Hydrolase</keyword>
<keyword id="KW-0408">Iron</keyword>
<keyword id="KW-0479">Metal-binding</keyword>
<keyword id="KW-0904">Protein phosphatase</keyword>
<keyword id="KW-0732">Signal</keyword>
<keyword id="KW-0926">Vacuole</keyword>
<keyword id="KW-0862">Zinc</keyword>
<dbReference type="EC" id="3.1.3.60"/>
<dbReference type="EMBL" id="AB052619">
    <property type="protein sequence ID" value="BAB60719.1"/>
    <property type="molecule type" value="mRNA"/>
</dbReference>
<dbReference type="SMR" id="Q93WP4"/>
<dbReference type="GlyCosmos" id="Q93WP4">
    <property type="glycosylation" value="4 sites, No reported glycans"/>
</dbReference>
<dbReference type="GO" id="GO:0005775">
    <property type="term" value="C:vacuolar lumen"/>
    <property type="evidence" value="ECO:0007669"/>
    <property type="project" value="UniProtKB-SubCell"/>
</dbReference>
<dbReference type="GO" id="GO:0003993">
    <property type="term" value="F:acid phosphatase activity"/>
    <property type="evidence" value="ECO:0007669"/>
    <property type="project" value="InterPro"/>
</dbReference>
<dbReference type="GO" id="GO:0046872">
    <property type="term" value="F:metal ion binding"/>
    <property type="evidence" value="ECO:0007669"/>
    <property type="project" value="UniProtKB-KW"/>
</dbReference>
<dbReference type="GO" id="GO:0050189">
    <property type="term" value="F:phosphoenolpyruvate phosphatase activity"/>
    <property type="evidence" value="ECO:0007669"/>
    <property type="project" value="UniProtKB-EC"/>
</dbReference>
<dbReference type="GO" id="GO:0004721">
    <property type="term" value="F:phosphoprotein phosphatase activity"/>
    <property type="evidence" value="ECO:0007669"/>
    <property type="project" value="UniProtKB-KW"/>
</dbReference>
<dbReference type="CDD" id="cd00839">
    <property type="entry name" value="MPP_PAPs"/>
    <property type="match status" value="1"/>
</dbReference>
<dbReference type="FunFam" id="2.60.40.380:FF:000001">
    <property type="entry name" value="Fe(3+)-Zn(2+) purple acid phosphatase"/>
    <property type="match status" value="1"/>
</dbReference>
<dbReference type="FunFam" id="3.60.21.10:FF:000034">
    <property type="entry name" value="Fe(3+)-Zn(2+) purple acid phosphatase"/>
    <property type="match status" value="1"/>
</dbReference>
<dbReference type="Gene3D" id="3.60.21.10">
    <property type="match status" value="1"/>
</dbReference>
<dbReference type="Gene3D" id="2.60.40.380">
    <property type="entry name" value="Purple acid phosphatase-like, N-terminal"/>
    <property type="match status" value="1"/>
</dbReference>
<dbReference type="InterPro" id="IPR004843">
    <property type="entry name" value="Calcineurin-like_PHP_ApaH"/>
</dbReference>
<dbReference type="InterPro" id="IPR029052">
    <property type="entry name" value="Metallo-depent_PP-like"/>
</dbReference>
<dbReference type="InterPro" id="IPR041792">
    <property type="entry name" value="MPP_PAP"/>
</dbReference>
<dbReference type="InterPro" id="IPR039331">
    <property type="entry name" value="PPA-like"/>
</dbReference>
<dbReference type="InterPro" id="IPR008963">
    <property type="entry name" value="Purple_acid_Pase-like_N"/>
</dbReference>
<dbReference type="InterPro" id="IPR015914">
    <property type="entry name" value="Purple_acid_Pase_N"/>
</dbReference>
<dbReference type="InterPro" id="IPR025733">
    <property type="entry name" value="Purple_acid_PPase_C_dom"/>
</dbReference>
<dbReference type="PANTHER" id="PTHR22953">
    <property type="entry name" value="ACID PHOSPHATASE RELATED"/>
    <property type="match status" value="1"/>
</dbReference>
<dbReference type="PANTHER" id="PTHR22953:SF55">
    <property type="entry name" value="BIFUNCTIONAL PURPLE ACID PHOSPHATASE 26"/>
    <property type="match status" value="1"/>
</dbReference>
<dbReference type="Pfam" id="PF00149">
    <property type="entry name" value="Metallophos"/>
    <property type="match status" value="1"/>
</dbReference>
<dbReference type="Pfam" id="PF14008">
    <property type="entry name" value="Metallophos_C"/>
    <property type="match status" value="1"/>
</dbReference>
<dbReference type="Pfam" id="PF16656">
    <property type="entry name" value="Pur_ac_phosph_N"/>
    <property type="match status" value="1"/>
</dbReference>
<dbReference type="SUPFAM" id="SSF56300">
    <property type="entry name" value="Metallo-dependent phosphatases"/>
    <property type="match status" value="1"/>
</dbReference>
<dbReference type="SUPFAM" id="SSF49363">
    <property type="entry name" value="Purple acid phosphatase, N-terminal domain"/>
    <property type="match status" value="1"/>
</dbReference>
<protein>
    <recommendedName>
        <fullName>Phosphoenolpyruvate phosphatase</fullName>
        <shortName>PEP phosphatase</shortName>
        <ecNumber>3.1.3.60</ecNumber>
    </recommendedName>
</protein>
<feature type="signal peptide">
    <location>
        <begin position="1"/>
        <end position="36"/>
    </location>
</feature>
<feature type="chain" id="PRO_5000049662" description="Phosphoenolpyruvate phosphatase">
    <location>
        <begin position="37"/>
        <end position="481"/>
    </location>
</feature>
<feature type="active site" description="Proton donor" evidence="1">
    <location>
        <position position="327"/>
    </location>
</feature>
<feature type="binding site" evidence="1">
    <location>
        <position position="168"/>
    </location>
    <ligand>
        <name>Fe cation</name>
        <dbReference type="ChEBI" id="CHEBI:24875"/>
    </ligand>
</feature>
<feature type="binding site" evidence="1">
    <location>
        <position position="195"/>
    </location>
    <ligand>
        <name>Fe cation</name>
        <dbReference type="ChEBI" id="CHEBI:24875"/>
    </ligand>
</feature>
<feature type="binding site" evidence="1">
    <location>
        <position position="195"/>
    </location>
    <ligand>
        <name>Zn(2+)</name>
        <dbReference type="ChEBI" id="CHEBI:29105"/>
    </ligand>
</feature>
<feature type="binding site" evidence="1">
    <location>
        <position position="198"/>
    </location>
    <ligand>
        <name>Fe cation</name>
        <dbReference type="ChEBI" id="CHEBI:24875"/>
    </ligand>
</feature>
<feature type="binding site" evidence="1">
    <location>
        <position position="232"/>
    </location>
    <ligand>
        <name>substrate</name>
    </ligand>
</feature>
<feature type="binding site" evidence="1">
    <location>
        <position position="232"/>
    </location>
    <ligand>
        <name>Zn(2+)</name>
        <dbReference type="ChEBI" id="CHEBI:29105"/>
    </ligand>
</feature>
<feature type="binding site" evidence="1">
    <location>
        <position position="317"/>
    </location>
    <ligand>
        <name>Zn(2+)</name>
        <dbReference type="ChEBI" id="CHEBI:29105"/>
    </ligand>
</feature>
<feature type="binding site" evidence="1">
    <location>
        <begin position="354"/>
        <end position="356"/>
    </location>
    <ligand>
        <name>substrate</name>
    </ligand>
</feature>
<feature type="binding site" evidence="1">
    <location>
        <position position="354"/>
    </location>
    <ligand>
        <name>Zn(2+)</name>
        <dbReference type="ChEBI" id="CHEBI:29105"/>
    </ligand>
</feature>
<feature type="binding site" evidence="1">
    <location>
        <position position="356"/>
    </location>
    <ligand>
        <name>Fe cation</name>
        <dbReference type="ChEBI" id="CHEBI:24875"/>
    </ligand>
</feature>
<feature type="glycosylation site" description="N-linked (GlcNAc...) asparagine" evidence="2">
    <location>
        <position position="109"/>
    </location>
</feature>
<feature type="glycosylation site" description="N-linked (GlcNAc...) asparagine" evidence="2">
    <location>
        <position position="206"/>
    </location>
</feature>
<feature type="glycosylation site" description="N-linked (GlcNAc...) asparagine" evidence="2">
    <location>
        <position position="370"/>
    </location>
</feature>
<feature type="glycosylation site" description="N-linked (GlcNAc...) asparagine" evidence="2">
    <location>
        <position position="427"/>
    </location>
</feature>
<reference key="1">
    <citation type="journal article" date="2001" name="Plant Sci.">
        <title>Characteristics of phosphoenolpyruvate phosphatase purified from Allium cepa.</title>
        <authorList>
            <person name="Shinano T."/>
            <person name="Yonetani R."/>
            <person name="Ushihara N."/>
            <person name="Adachi H."/>
            <person name="Wasaki J."/>
            <person name="Matsui H."/>
            <person name="Osaki M."/>
        </authorList>
    </citation>
    <scope>NUCLEOTIDE SEQUENCE [LARGE SCALE GENOMIC DNA]</scope>
    <scope>CATALYTIC ACTIVITY</scope>
    <scope>BIOPHYSICOCHEMICAL PROPERTIES</scope>
    <scope>FUNCTION</scope>
    <scope>SUBCELLULAR LOCATION</scope>
</reference>
<accession>Q93WP4</accession>
<sequence>MPIYTSRSCFYLLLFHIILLCSVDKTLCRQTSSFVRSEFPAVDIPIDSKEFAVPKNQFSPQQVHITQGDYDGKAVIVSWVTFIDPGKSEVVYGTSPNSYDHSAQGKTTNYTYYDYTSGYIHHCLLDKLEYDTKYYYKIGKGDAAREFWFHTPPQIHPDASYTFGIIGDLGQTYNSLSTLEHYMKSKGQTVLFVGDLSYADRYSCNNGTRWDSWGRFVERSVAYQPWIWTVGNHEIEYRPDLGEVFPFRAYLNRYPTPHLASASSSPLWYSIRRASAHIIVLSSYSPFVKYTPQWLWLSEELTRVDREKTPWLIVLMHAPLYNSNEAHYMEGESMRVAFESWFVQYKVDLVFAGHVHAYERSYRISNIVYNITSGNRYPIPDKSAPVYITVGDGGNQEGLAERFSESQPDYSAFRESSYGHSTLELRNRTHAFYQWNRNDDGKHIPVDRIIFRNQYWASNTRRRRLKKTRPSQAVERLISSY</sequence>
<name>PEPP_ALLCE</name>
<proteinExistence type="evidence at protein level"/>
<organism>
    <name type="scientific">Allium cepa</name>
    <name type="common">Onion</name>
    <dbReference type="NCBI Taxonomy" id="4679"/>
    <lineage>
        <taxon>Eukaryota</taxon>
        <taxon>Viridiplantae</taxon>
        <taxon>Streptophyta</taxon>
        <taxon>Embryophyta</taxon>
        <taxon>Tracheophyta</taxon>
        <taxon>Spermatophyta</taxon>
        <taxon>Magnoliopsida</taxon>
        <taxon>Liliopsida</taxon>
        <taxon>Asparagales</taxon>
        <taxon>Amaryllidaceae</taxon>
        <taxon>Allioideae</taxon>
        <taxon>Allieae</taxon>
        <taxon>Allium</taxon>
    </lineage>
</organism>
<comment type="function">
    <text evidence="3">Phosphoenolpyruvate phosphatase that probably operates in the vacuole to release phosphate from phosphoenolpyruvate (PEP) under phosphorus starvation.</text>
</comment>
<comment type="catalytic activity">
    <reaction evidence="3">
        <text>phosphoenolpyruvate + H2O = pyruvate + phosphate</text>
        <dbReference type="Rhea" id="RHEA:19997"/>
        <dbReference type="ChEBI" id="CHEBI:15361"/>
        <dbReference type="ChEBI" id="CHEBI:15377"/>
        <dbReference type="ChEBI" id="CHEBI:43474"/>
        <dbReference type="ChEBI" id="CHEBI:58702"/>
        <dbReference type="EC" id="3.1.3.60"/>
    </reaction>
</comment>
<comment type="biophysicochemical properties">
    <kinetics>
        <KM evidence="3">0.44 mM for phosphoenolpyruvate</KM>
        <KM evidence="3">3.72 mM for fructose 6-phosphate</KM>
        <KM evidence="3">1.47 mM for glucose 6-phosphate</KM>
        <KM evidence="3">1.6 mM for p-nitrophenylphosphate</KM>
        <KM evidence="3">1.51 mM for ATP</KM>
        <KM evidence="3">2.69 mM for ADP</KM>
        <KM evidence="3">1.36 mM for phytic acid</KM>
        <Vmax evidence="3">240.0 umol/min/mg enzyme toward phosphoenolpyruvate</Vmax>
        <Vmax evidence="3">242.0 umol/min/mg enzyme toward fructose 6-phosphate</Vmax>
        <Vmax evidence="3">374.0 umol/min/mg enzyme toward glucose 6-phosphate</Vmax>
        <Vmax evidence="3">279.0 umol/min/mg enzyme toward p-nitrophenylphosphate</Vmax>
        <Vmax evidence="3">349.0 umol/min/mg enzyme toward ATP</Vmax>
        <Vmax evidence="3">510.0 umol/min/mg enzyme toward ADP</Vmax>
        <Vmax evidence="3">178.0 umol/min/mg enzyme toward phytic acid</Vmax>
    </kinetics>
    <phDependence>
        <text evidence="3">Optimum pH is 7.</text>
    </phDependence>
</comment>
<comment type="subcellular location">
    <subcellularLocation>
        <location evidence="5">Vacuole lumen</location>
    </subcellularLocation>
</comment>
<comment type="similarity">
    <text evidence="4">Belongs to the metallophosphoesterase superfamily. Purple acid phosphatase family.</text>
</comment>
<evidence type="ECO:0000250" key="1"/>
<evidence type="ECO:0000255" key="2"/>
<evidence type="ECO:0000269" key="3">
    <source ref="1"/>
</evidence>
<evidence type="ECO:0000305" key="4"/>
<evidence type="ECO:0000305" key="5">
    <source ref="1"/>
</evidence>